<sequence>MYRLISSIASKARVARNCTSQIGSRLSSTRNYAAKDIRFGVEGRALMLRGVEELADAVKVTIPPKGRNVIIEQSWGAPKVTKDGVTVAKSIEFKDRVKNVGASLVKQVANRPTQLNRCLGDGTTCATVLTRAIFTEGCKSVAAGMNAMDLRRGIKLAVDTVVTKLKSRARMISTSEEIAQVGTISANGDRELVTDCKAMESVGKEGVITIQDGKTLFNELEVVEGMKIDRGYISPYFITNQKNQKCELEDPLILIHEKKISNLNSMVKVLELALKSQRSLLIVAADLESDALAVLILNKLRAGIKVCAVKAPGFGENRKANMHDLATLTGAQVITEELGMNLEKIDLSMLGNCKKITVSKDDTVFLGWGAGDKKAIGERCEQIRSMVEASESDYDKEKLQERLAKLSGGVAVLKIGGASESEVGEKKDRVTDALNATKAAVEEGIVPGGGVALLYASKELDKLSTANFDHKIGVQIIQNALKTPVYTIASNAGVEGAVIVGKLLESDNPDLGYDAAKGEYVDMVKSGIIDPVKVIRTALVDAASVSSLLTTTEAVVTEIPTKEDASPAMGGGGGGMGGMGGMGGMGF</sequence>
<dbReference type="EMBL" id="Z27165">
    <property type="protein sequence ID" value="CAA81689.1"/>
    <property type="molecule type" value="mRNA"/>
</dbReference>
<dbReference type="PIR" id="S38634">
    <property type="entry name" value="S38634"/>
</dbReference>
<dbReference type="RefSeq" id="NP_001302985.1">
    <property type="nucleotide sequence ID" value="NM_001316056.1"/>
</dbReference>
<dbReference type="SMR" id="P35480"/>
<dbReference type="GeneID" id="106437789"/>
<dbReference type="KEGG" id="bna:106437789"/>
<dbReference type="OrthoDB" id="1733909at2759"/>
<dbReference type="GO" id="GO:0005739">
    <property type="term" value="C:mitochondrion"/>
    <property type="evidence" value="ECO:0007669"/>
    <property type="project" value="UniProtKB-SubCell"/>
</dbReference>
<dbReference type="GO" id="GO:0005524">
    <property type="term" value="F:ATP binding"/>
    <property type="evidence" value="ECO:0007669"/>
    <property type="project" value="UniProtKB-KW"/>
</dbReference>
<dbReference type="GO" id="GO:0140662">
    <property type="term" value="F:ATP-dependent protein folding chaperone"/>
    <property type="evidence" value="ECO:0007669"/>
    <property type="project" value="InterPro"/>
</dbReference>
<dbReference type="GO" id="GO:0042026">
    <property type="term" value="P:protein refolding"/>
    <property type="evidence" value="ECO:0007669"/>
    <property type="project" value="InterPro"/>
</dbReference>
<dbReference type="CDD" id="cd03344">
    <property type="entry name" value="GroEL"/>
    <property type="match status" value="1"/>
</dbReference>
<dbReference type="FunFam" id="3.50.7.10:FF:000001">
    <property type="entry name" value="60 kDa chaperonin"/>
    <property type="match status" value="1"/>
</dbReference>
<dbReference type="Gene3D" id="3.50.7.10">
    <property type="entry name" value="GroEL"/>
    <property type="match status" value="1"/>
</dbReference>
<dbReference type="Gene3D" id="1.10.560.10">
    <property type="entry name" value="GroEL-like equatorial domain"/>
    <property type="match status" value="1"/>
</dbReference>
<dbReference type="Gene3D" id="3.30.260.10">
    <property type="entry name" value="TCP-1-like chaperonin intermediate domain"/>
    <property type="match status" value="1"/>
</dbReference>
<dbReference type="HAMAP" id="MF_00600">
    <property type="entry name" value="CH60"/>
    <property type="match status" value="1"/>
</dbReference>
<dbReference type="InterPro" id="IPR018370">
    <property type="entry name" value="Chaperonin_Cpn60_CS"/>
</dbReference>
<dbReference type="InterPro" id="IPR001844">
    <property type="entry name" value="Cpn60/GroEL"/>
</dbReference>
<dbReference type="InterPro" id="IPR002423">
    <property type="entry name" value="Cpn60/GroEL/TCP-1"/>
</dbReference>
<dbReference type="InterPro" id="IPR027409">
    <property type="entry name" value="GroEL-like_apical_dom_sf"/>
</dbReference>
<dbReference type="InterPro" id="IPR027413">
    <property type="entry name" value="GROEL-like_equatorial_sf"/>
</dbReference>
<dbReference type="InterPro" id="IPR027410">
    <property type="entry name" value="TCP-1-like_intermed_sf"/>
</dbReference>
<dbReference type="NCBIfam" id="TIGR02348">
    <property type="entry name" value="GroEL"/>
    <property type="match status" value="1"/>
</dbReference>
<dbReference type="NCBIfam" id="NF000592">
    <property type="entry name" value="PRK00013.1"/>
    <property type="match status" value="1"/>
</dbReference>
<dbReference type="NCBIfam" id="NF009487">
    <property type="entry name" value="PRK12849.1"/>
    <property type="match status" value="1"/>
</dbReference>
<dbReference type="NCBIfam" id="NF009488">
    <property type="entry name" value="PRK12850.1"/>
    <property type="match status" value="1"/>
</dbReference>
<dbReference type="NCBIfam" id="NF009489">
    <property type="entry name" value="PRK12851.1"/>
    <property type="match status" value="1"/>
</dbReference>
<dbReference type="PANTHER" id="PTHR45633">
    <property type="entry name" value="60 KDA HEAT SHOCK PROTEIN, MITOCHONDRIAL"/>
    <property type="match status" value="1"/>
</dbReference>
<dbReference type="Pfam" id="PF00118">
    <property type="entry name" value="Cpn60_TCP1"/>
    <property type="match status" value="1"/>
</dbReference>
<dbReference type="PRINTS" id="PR00298">
    <property type="entry name" value="CHAPERONIN60"/>
</dbReference>
<dbReference type="SUPFAM" id="SSF52029">
    <property type="entry name" value="GroEL apical domain-like"/>
    <property type="match status" value="1"/>
</dbReference>
<dbReference type="SUPFAM" id="SSF48592">
    <property type="entry name" value="GroEL equatorial domain-like"/>
    <property type="match status" value="1"/>
</dbReference>
<dbReference type="SUPFAM" id="SSF54849">
    <property type="entry name" value="GroEL-intermediate domain like"/>
    <property type="match status" value="1"/>
</dbReference>
<dbReference type="PROSITE" id="PS00296">
    <property type="entry name" value="CHAPERONINS_CPN60"/>
    <property type="match status" value="1"/>
</dbReference>
<accession>P35480</accession>
<proteinExistence type="evidence at transcript level"/>
<protein>
    <recommendedName>
        <fullName>Chaperonin CPN60, mitochondrial</fullName>
    </recommendedName>
</protein>
<reference key="1">
    <citation type="journal article" date="1994" name="Plant Physiol.">
        <title>Isolation of a full-length cDNA encoding Brassica napus mitochondrial chaperonin-60.</title>
        <authorList>
            <person name="Cole K.P."/>
            <person name="Blakeley S.D."/>
            <person name="Dennis D.T."/>
        </authorList>
    </citation>
    <scope>NUCLEOTIDE SEQUENCE [MRNA]</scope>
    <source>
        <tissue>Seed</tissue>
    </source>
</reference>
<comment type="function">
    <text>Implicated in mitochondrial protein import and macromolecular assembly. May facilitate the correct folding of imported proteins. May also prevent misfolding and promote the refolding and proper assembly of unfolded polypeptides generated under stress conditions in the mitochondrial matrix.</text>
</comment>
<comment type="subcellular location">
    <subcellularLocation>
        <location>Mitochondrion</location>
    </subcellularLocation>
</comment>
<comment type="similarity">
    <text evidence="2">Belongs to the chaperonin (HSP60) family.</text>
</comment>
<name>CH60_BRANA</name>
<keyword id="KW-0067">ATP-binding</keyword>
<keyword id="KW-0143">Chaperone</keyword>
<keyword id="KW-0496">Mitochondrion</keyword>
<keyword id="KW-0547">Nucleotide-binding</keyword>
<keyword id="KW-0346">Stress response</keyword>
<keyword id="KW-0809">Transit peptide</keyword>
<feature type="transit peptide" description="Mitochondrion" evidence="1">
    <location>
        <begin position="1"/>
        <end position="32"/>
    </location>
</feature>
<feature type="chain" id="PRO_0000005010" description="Chaperonin CPN60, mitochondrial">
    <location>
        <begin position="33"/>
        <end position="587"/>
    </location>
</feature>
<organism>
    <name type="scientific">Brassica napus</name>
    <name type="common">Rape</name>
    <dbReference type="NCBI Taxonomy" id="3708"/>
    <lineage>
        <taxon>Eukaryota</taxon>
        <taxon>Viridiplantae</taxon>
        <taxon>Streptophyta</taxon>
        <taxon>Embryophyta</taxon>
        <taxon>Tracheophyta</taxon>
        <taxon>Spermatophyta</taxon>
        <taxon>Magnoliopsida</taxon>
        <taxon>eudicotyledons</taxon>
        <taxon>Gunneridae</taxon>
        <taxon>Pentapetalae</taxon>
        <taxon>rosids</taxon>
        <taxon>malvids</taxon>
        <taxon>Brassicales</taxon>
        <taxon>Brassicaceae</taxon>
        <taxon>Brassiceae</taxon>
        <taxon>Brassica</taxon>
    </lineage>
</organism>
<evidence type="ECO:0000255" key="1"/>
<evidence type="ECO:0000305" key="2"/>